<protein>
    <recommendedName>
        <fullName evidence="1">UDP-N-acetylmuramate--L-alanine ligase</fullName>
        <ecNumber evidence="1">6.3.2.8</ecNumber>
    </recommendedName>
    <alternativeName>
        <fullName evidence="1">UDP-N-acetylmuramoyl-L-alanine synthetase</fullName>
    </alternativeName>
</protein>
<sequence length="475" mass="50029">MKHIVKNIHFVGIGGAGMSGIAEVLLNLGYKVSGSDVGSNAATRRLASLGATVMHGHDAANIAGANAVVVSTAVSGDNPEVLAARSKRIPVVPRAVMLAELMRLKQGVAIAGTHGKTTTTSLVASVLAEGGLDPTFVIGGRLNSAGANARLGTGDFIVAEADESDASFLNLFPVIEVITNIDADHMDTYGHDFARLKQAFIEFTQRLPFYGIAVLCVDDPNVREILPFVSKPVVRYGFAEDAQIRAVNARAVDGQMHFTVLRHLNGHAEPPLDVVLNLPGLHNVQNALAAIAIATELEVPDAAIVKALREFHGVGRRFQRYGEVATADGTGTFTLVDDYGHHPVEMAATLSAARGAFPGRRLVLAFQPHRFTRTRDCFEDFVKVLGTVDALLLAEVYAAGEAPIVAADGRALTRALRVAAKVEPVFVEQMEEMPQAIMNAARPGDVVVTMGAGSIGAVPGQVVSHQQPLQAGGAA</sequence>
<evidence type="ECO:0000255" key="1">
    <source>
        <dbReference type="HAMAP-Rule" id="MF_00046"/>
    </source>
</evidence>
<dbReference type="EC" id="6.3.2.8" evidence="1"/>
<dbReference type="EMBL" id="CP000090">
    <property type="protein sequence ID" value="AAZ62338.1"/>
    <property type="molecule type" value="Genomic_DNA"/>
</dbReference>
<dbReference type="SMR" id="Q46WZ5"/>
<dbReference type="STRING" id="264198.Reut_A2978"/>
<dbReference type="KEGG" id="reu:Reut_A2978"/>
<dbReference type="eggNOG" id="COG0773">
    <property type="taxonomic scope" value="Bacteria"/>
</dbReference>
<dbReference type="HOGENOM" id="CLU_028104_2_2_4"/>
<dbReference type="OrthoDB" id="9804126at2"/>
<dbReference type="UniPathway" id="UPA00219"/>
<dbReference type="GO" id="GO:0005737">
    <property type="term" value="C:cytoplasm"/>
    <property type="evidence" value="ECO:0007669"/>
    <property type="project" value="UniProtKB-SubCell"/>
</dbReference>
<dbReference type="GO" id="GO:0005524">
    <property type="term" value="F:ATP binding"/>
    <property type="evidence" value="ECO:0007669"/>
    <property type="project" value="UniProtKB-UniRule"/>
</dbReference>
<dbReference type="GO" id="GO:0008763">
    <property type="term" value="F:UDP-N-acetylmuramate-L-alanine ligase activity"/>
    <property type="evidence" value="ECO:0007669"/>
    <property type="project" value="UniProtKB-UniRule"/>
</dbReference>
<dbReference type="GO" id="GO:0051301">
    <property type="term" value="P:cell division"/>
    <property type="evidence" value="ECO:0007669"/>
    <property type="project" value="UniProtKB-KW"/>
</dbReference>
<dbReference type="GO" id="GO:0071555">
    <property type="term" value="P:cell wall organization"/>
    <property type="evidence" value="ECO:0007669"/>
    <property type="project" value="UniProtKB-KW"/>
</dbReference>
<dbReference type="GO" id="GO:0009252">
    <property type="term" value="P:peptidoglycan biosynthetic process"/>
    <property type="evidence" value="ECO:0007669"/>
    <property type="project" value="UniProtKB-UniRule"/>
</dbReference>
<dbReference type="GO" id="GO:0008360">
    <property type="term" value="P:regulation of cell shape"/>
    <property type="evidence" value="ECO:0007669"/>
    <property type="project" value="UniProtKB-KW"/>
</dbReference>
<dbReference type="FunFam" id="3.40.1190.10:FF:000001">
    <property type="entry name" value="UDP-N-acetylmuramate--L-alanine ligase"/>
    <property type="match status" value="1"/>
</dbReference>
<dbReference type="Gene3D" id="3.90.190.20">
    <property type="entry name" value="Mur ligase, C-terminal domain"/>
    <property type="match status" value="1"/>
</dbReference>
<dbReference type="Gene3D" id="3.40.1190.10">
    <property type="entry name" value="Mur-like, catalytic domain"/>
    <property type="match status" value="1"/>
</dbReference>
<dbReference type="Gene3D" id="3.40.50.720">
    <property type="entry name" value="NAD(P)-binding Rossmann-like Domain"/>
    <property type="match status" value="1"/>
</dbReference>
<dbReference type="HAMAP" id="MF_00046">
    <property type="entry name" value="MurC"/>
    <property type="match status" value="1"/>
</dbReference>
<dbReference type="InterPro" id="IPR036565">
    <property type="entry name" value="Mur-like_cat_sf"/>
</dbReference>
<dbReference type="InterPro" id="IPR004101">
    <property type="entry name" value="Mur_ligase_C"/>
</dbReference>
<dbReference type="InterPro" id="IPR036615">
    <property type="entry name" value="Mur_ligase_C_dom_sf"/>
</dbReference>
<dbReference type="InterPro" id="IPR013221">
    <property type="entry name" value="Mur_ligase_cen"/>
</dbReference>
<dbReference type="InterPro" id="IPR000713">
    <property type="entry name" value="Mur_ligase_N"/>
</dbReference>
<dbReference type="InterPro" id="IPR050061">
    <property type="entry name" value="MurCDEF_pg_biosynth"/>
</dbReference>
<dbReference type="InterPro" id="IPR005758">
    <property type="entry name" value="UDP-N-AcMur_Ala_ligase_MurC"/>
</dbReference>
<dbReference type="NCBIfam" id="TIGR01082">
    <property type="entry name" value="murC"/>
    <property type="match status" value="1"/>
</dbReference>
<dbReference type="PANTHER" id="PTHR43445:SF3">
    <property type="entry name" value="UDP-N-ACETYLMURAMATE--L-ALANINE LIGASE"/>
    <property type="match status" value="1"/>
</dbReference>
<dbReference type="PANTHER" id="PTHR43445">
    <property type="entry name" value="UDP-N-ACETYLMURAMATE--L-ALANINE LIGASE-RELATED"/>
    <property type="match status" value="1"/>
</dbReference>
<dbReference type="Pfam" id="PF01225">
    <property type="entry name" value="Mur_ligase"/>
    <property type="match status" value="1"/>
</dbReference>
<dbReference type="Pfam" id="PF02875">
    <property type="entry name" value="Mur_ligase_C"/>
    <property type="match status" value="1"/>
</dbReference>
<dbReference type="Pfam" id="PF08245">
    <property type="entry name" value="Mur_ligase_M"/>
    <property type="match status" value="1"/>
</dbReference>
<dbReference type="SUPFAM" id="SSF51984">
    <property type="entry name" value="MurCD N-terminal domain"/>
    <property type="match status" value="1"/>
</dbReference>
<dbReference type="SUPFAM" id="SSF53623">
    <property type="entry name" value="MurD-like peptide ligases, catalytic domain"/>
    <property type="match status" value="1"/>
</dbReference>
<dbReference type="SUPFAM" id="SSF53244">
    <property type="entry name" value="MurD-like peptide ligases, peptide-binding domain"/>
    <property type="match status" value="1"/>
</dbReference>
<name>MURC_CUPPJ</name>
<reference key="1">
    <citation type="journal article" date="2010" name="PLoS ONE">
        <title>The complete multipartite genome sequence of Cupriavidus necator JMP134, a versatile pollutant degrader.</title>
        <authorList>
            <person name="Lykidis A."/>
            <person name="Perez-Pantoja D."/>
            <person name="Ledger T."/>
            <person name="Mavromatis K."/>
            <person name="Anderson I.J."/>
            <person name="Ivanova N.N."/>
            <person name="Hooper S.D."/>
            <person name="Lapidus A."/>
            <person name="Lucas S."/>
            <person name="Gonzalez B."/>
            <person name="Kyrpides N.C."/>
        </authorList>
    </citation>
    <scope>NUCLEOTIDE SEQUENCE [LARGE SCALE GENOMIC DNA]</scope>
    <source>
        <strain>JMP134 / LMG 1197</strain>
    </source>
</reference>
<comment type="function">
    <text evidence="1">Cell wall formation.</text>
</comment>
<comment type="catalytic activity">
    <reaction evidence="1">
        <text>UDP-N-acetyl-alpha-D-muramate + L-alanine + ATP = UDP-N-acetyl-alpha-D-muramoyl-L-alanine + ADP + phosphate + H(+)</text>
        <dbReference type="Rhea" id="RHEA:23372"/>
        <dbReference type="ChEBI" id="CHEBI:15378"/>
        <dbReference type="ChEBI" id="CHEBI:30616"/>
        <dbReference type="ChEBI" id="CHEBI:43474"/>
        <dbReference type="ChEBI" id="CHEBI:57972"/>
        <dbReference type="ChEBI" id="CHEBI:70757"/>
        <dbReference type="ChEBI" id="CHEBI:83898"/>
        <dbReference type="ChEBI" id="CHEBI:456216"/>
        <dbReference type="EC" id="6.3.2.8"/>
    </reaction>
</comment>
<comment type="pathway">
    <text evidence="1">Cell wall biogenesis; peptidoglycan biosynthesis.</text>
</comment>
<comment type="subcellular location">
    <subcellularLocation>
        <location evidence="1">Cytoplasm</location>
    </subcellularLocation>
</comment>
<comment type="similarity">
    <text evidence="1">Belongs to the MurCDEF family.</text>
</comment>
<proteinExistence type="inferred from homology"/>
<feature type="chain" id="PRO_0000242582" description="UDP-N-acetylmuramate--L-alanine ligase">
    <location>
        <begin position="1"/>
        <end position="475"/>
    </location>
</feature>
<feature type="binding site" evidence="1">
    <location>
        <begin position="112"/>
        <end position="118"/>
    </location>
    <ligand>
        <name>ATP</name>
        <dbReference type="ChEBI" id="CHEBI:30616"/>
    </ligand>
</feature>
<gene>
    <name evidence="1" type="primary">murC</name>
    <name type="ordered locus">Reut_A2978</name>
</gene>
<organism>
    <name type="scientific">Cupriavidus pinatubonensis (strain JMP 134 / LMG 1197)</name>
    <name type="common">Cupriavidus necator (strain JMP 134)</name>
    <dbReference type="NCBI Taxonomy" id="264198"/>
    <lineage>
        <taxon>Bacteria</taxon>
        <taxon>Pseudomonadati</taxon>
        <taxon>Pseudomonadota</taxon>
        <taxon>Betaproteobacteria</taxon>
        <taxon>Burkholderiales</taxon>
        <taxon>Burkholderiaceae</taxon>
        <taxon>Cupriavidus</taxon>
    </lineage>
</organism>
<keyword id="KW-0067">ATP-binding</keyword>
<keyword id="KW-0131">Cell cycle</keyword>
<keyword id="KW-0132">Cell division</keyword>
<keyword id="KW-0133">Cell shape</keyword>
<keyword id="KW-0961">Cell wall biogenesis/degradation</keyword>
<keyword id="KW-0963">Cytoplasm</keyword>
<keyword id="KW-0436">Ligase</keyword>
<keyword id="KW-0547">Nucleotide-binding</keyword>
<keyword id="KW-0573">Peptidoglycan synthesis</keyword>
<accession>Q46WZ5</accession>